<gene>
    <name type="primary">mdxF</name>
    <name type="synonym">yvdH</name>
    <name type="ordered locus">BSU34600</name>
</gene>
<evidence type="ECO:0000255" key="1">
    <source>
        <dbReference type="PROSITE-ProRule" id="PRU00441"/>
    </source>
</evidence>
<evidence type="ECO:0000305" key="2"/>
<evidence type="ECO:0000305" key="3">
    <source>
    </source>
</evidence>
<organism>
    <name type="scientific">Bacillus subtilis (strain 168)</name>
    <dbReference type="NCBI Taxonomy" id="224308"/>
    <lineage>
        <taxon>Bacteria</taxon>
        <taxon>Bacillati</taxon>
        <taxon>Bacillota</taxon>
        <taxon>Bacilli</taxon>
        <taxon>Bacillales</taxon>
        <taxon>Bacillaceae</taxon>
        <taxon>Bacillus</taxon>
    </lineage>
</organism>
<name>MDXF_BACSU</name>
<keyword id="KW-1003">Cell membrane</keyword>
<keyword id="KW-0472">Membrane</keyword>
<keyword id="KW-0625">Polysaccharide transport</keyword>
<keyword id="KW-1185">Reference proteome</keyword>
<keyword id="KW-0762">Sugar transport</keyword>
<keyword id="KW-0812">Transmembrane</keyword>
<keyword id="KW-1133">Transmembrane helix</keyword>
<keyword id="KW-0813">Transport</keyword>
<feature type="chain" id="PRO_0000361678" description="Maltodextrin transport system permease protein MdxF">
    <location>
        <begin position="1"/>
        <end position="435"/>
    </location>
</feature>
<feature type="transmembrane region" description="Helical" evidence="1">
    <location>
        <begin position="35"/>
        <end position="55"/>
    </location>
</feature>
<feature type="transmembrane region" description="Helical" evidence="1">
    <location>
        <begin position="73"/>
        <end position="93"/>
    </location>
</feature>
<feature type="transmembrane region" description="Helical" evidence="1">
    <location>
        <begin position="136"/>
        <end position="156"/>
    </location>
</feature>
<feature type="transmembrane region" description="Helical" evidence="1">
    <location>
        <begin position="199"/>
        <end position="219"/>
    </location>
</feature>
<feature type="transmembrane region" description="Helical" evidence="1">
    <location>
        <begin position="234"/>
        <end position="254"/>
    </location>
</feature>
<feature type="transmembrane region" description="Helical" evidence="1">
    <location>
        <begin position="293"/>
        <end position="313"/>
    </location>
</feature>
<feature type="transmembrane region" description="Helical" evidence="1">
    <location>
        <begin position="337"/>
        <end position="357"/>
    </location>
</feature>
<feature type="transmembrane region" description="Helical" evidence="1">
    <location>
        <begin position="403"/>
        <end position="423"/>
    </location>
</feature>
<feature type="domain" description="ABC transmembrane type-1" evidence="1">
    <location>
        <begin position="195"/>
        <end position="422"/>
    </location>
</feature>
<protein>
    <recommendedName>
        <fullName>Maltodextrin transport system permease protein MdxF</fullName>
    </recommendedName>
</protein>
<sequence length="435" mass="48529">MNKHHTLTKQKRKAGLLSIIPGLGQIANQQLSKGLLFLAITGLFAFELCVFGIQALTGLMTLGSVPGEDHSLFMLIEGTLQLIVTMIFLMFYIFNIHDSRKTAAMKAAGLEVNTTAKDMICHAGDKGFPYLFTLPAYIMMVFVIIFPVLVTLFVALTNYDFYHIPPNRLIDWVGFKNFLNIFFLGSYRETFVNVLGWTVIWTICATTLQIILGIVTALFVNQDFIKGKRIFRMIFLFPWAVPAFITIMSFSNMFNDSIGAVNAQVIPLFNHLPFVELPAIAWKTDPFWTKTALIMIQTWLGFPYIYVMVTGVLQAIPGELYEAAKIDGATFIQRFRHITFPMILFATAPVMITQYTFNFNNFSIIYLFNEGGPGSAGAGAGSTDILISWIYKLTTGTSPQYSVAAAVTLLISFIVIGISLIAFKKSNAFGNEEVM</sequence>
<accession>O06990</accession>
<accession>Q795G9</accession>
<proteinExistence type="inferred from homology"/>
<dbReference type="EMBL" id="Z94043">
    <property type="protein sequence ID" value="CAB08037.1"/>
    <property type="molecule type" value="Genomic_DNA"/>
</dbReference>
<dbReference type="EMBL" id="AL009126">
    <property type="protein sequence ID" value="CAB15465.1"/>
    <property type="molecule type" value="Genomic_DNA"/>
</dbReference>
<dbReference type="PIR" id="H70033">
    <property type="entry name" value="H70033"/>
</dbReference>
<dbReference type="RefSeq" id="NP_391340.1">
    <property type="nucleotide sequence ID" value="NC_000964.3"/>
</dbReference>
<dbReference type="RefSeq" id="WP_003243114.1">
    <property type="nucleotide sequence ID" value="NZ_OZ025638.1"/>
</dbReference>
<dbReference type="SMR" id="O06990"/>
<dbReference type="FunCoup" id="O06990">
    <property type="interactions" value="230"/>
</dbReference>
<dbReference type="STRING" id="224308.BSU34600"/>
<dbReference type="TCDB" id="3.A.1.1.26">
    <property type="family name" value="the atp-binding cassette (abc) superfamily"/>
</dbReference>
<dbReference type="PaxDb" id="224308-BSU34600"/>
<dbReference type="EnsemblBacteria" id="CAB15465">
    <property type="protein sequence ID" value="CAB15465"/>
    <property type="gene ID" value="BSU_34600"/>
</dbReference>
<dbReference type="GeneID" id="937063"/>
<dbReference type="KEGG" id="bsu:BSU34600"/>
<dbReference type="PATRIC" id="fig|224308.179.peg.3747"/>
<dbReference type="eggNOG" id="COG1175">
    <property type="taxonomic scope" value="Bacteria"/>
</dbReference>
<dbReference type="InParanoid" id="O06990"/>
<dbReference type="OrthoDB" id="9778687at2"/>
<dbReference type="PhylomeDB" id="O06990"/>
<dbReference type="BioCyc" id="BSUB:BSU34600-MONOMER"/>
<dbReference type="SABIO-RK" id="O06990"/>
<dbReference type="Proteomes" id="UP000001570">
    <property type="component" value="Chromosome"/>
</dbReference>
<dbReference type="GO" id="GO:1990060">
    <property type="term" value="C:maltose transport complex"/>
    <property type="evidence" value="ECO:0000318"/>
    <property type="project" value="GO_Central"/>
</dbReference>
<dbReference type="GO" id="GO:0015423">
    <property type="term" value="F:ABC-type maltose transporter activity"/>
    <property type="evidence" value="ECO:0000318"/>
    <property type="project" value="GO_Central"/>
</dbReference>
<dbReference type="GO" id="GO:0042956">
    <property type="term" value="P:maltodextrin transmembrane transport"/>
    <property type="evidence" value="ECO:0000318"/>
    <property type="project" value="GO_Central"/>
</dbReference>
<dbReference type="CDD" id="cd06261">
    <property type="entry name" value="TM_PBP2"/>
    <property type="match status" value="1"/>
</dbReference>
<dbReference type="FunFam" id="1.10.3720.10:FF:000036">
    <property type="entry name" value="Maltodextrin ABC transporter, permease protein"/>
    <property type="match status" value="1"/>
</dbReference>
<dbReference type="Gene3D" id="1.10.3720.10">
    <property type="entry name" value="MetI-like"/>
    <property type="match status" value="1"/>
</dbReference>
<dbReference type="InterPro" id="IPR000515">
    <property type="entry name" value="MetI-like"/>
</dbReference>
<dbReference type="InterPro" id="IPR035906">
    <property type="entry name" value="MetI-like_sf"/>
</dbReference>
<dbReference type="PANTHER" id="PTHR47314">
    <property type="entry name" value="MALTOSE/MALTODEXTRIN TRANSPORT SYSTEM PERMEASE PROTEIN MALF"/>
    <property type="match status" value="1"/>
</dbReference>
<dbReference type="PANTHER" id="PTHR47314:SF1">
    <property type="entry name" value="MALTOSE_MALTODEXTRIN TRANSPORT SYSTEM PERMEASE PROTEIN MALF"/>
    <property type="match status" value="1"/>
</dbReference>
<dbReference type="Pfam" id="PF00528">
    <property type="entry name" value="BPD_transp_1"/>
    <property type="match status" value="1"/>
</dbReference>
<dbReference type="SUPFAM" id="SSF160964">
    <property type="entry name" value="MalF N-terminal region-like"/>
    <property type="match status" value="1"/>
</dbReference>
<dbReference type="SUPFAM" id="SSF161098">
    <property type="entry name" value="MetI-like"/>
    <property type="match status" value="1"/>
</dbReference>
<dbReference type="PROSITE" id="PS50928">
    <property type="entry name" value="ABC_TM1"/>
    <property type="match status" value="1"/>
</dbReference>
<reference key="1">
    <citation type="submission" date="1997-04" db="EMBL/GenBank/DDBJ databases">
        <authorList>
            <person name="Denizot F."/>
        </authorList>
    </citation>
    <scope>NUCLEOTIDE SEQUENCE [GENOMIC DNA]</scope>
</reference>
<reference key="2">
    <citation type="journal article" date="1997" name="Nature">
        <title>The complete genome sequence of the Gram-positive bacterium Bacillus subtilis.</title>
        <authorList>
            <person name="Kunst F."/>
            <person name="Ogasawara N."/>
            <person name="Moszer I."/>
            <person name="Albertini A.M."/>
            <person name="Alloni G."/>
            <person name="Azevedo V."/>
            <person name="Bertero M.G."/>
            <person name="Bessieres P."/>
            <person name="Bolotin A."/>
            <person name="Borchert S."/>
            <person name="Borriss R."/>
            <person name="Boursier L."/>
            <person name="Brans A."/>
            <person name="Braun M."/>
            <person name="Brignell S.C."/>
            <person name="Bron S."/>
            <person name="Brouillet S."/>
            <person name="Bruschi C.V."/>
            <person name="Caldwell B."/>
            <person name="Capuano V."/>
            <person name="Carter N.M."/>
            <person name="Choi S.-K."/>
            <person name="Codani J.-J."/>
            <person name="Connerton I.F."/>
            <person name="Cummings N.J."/>
            <person name="Daniel R.A."/>
            <person name="Denizot F."/>
            <person name="Devine K.M."/>
            <person name="Duesterhoeft A."/>
            <person name="Ehrlich S.D."/>
            <person name="Emmerson P.T."/>
            <person name="Entian K.-D."/>
            <person name="Errington J."/>
            <person name="Fabret C."/>
            <person name="Ferrari E."/>
            <person name="Foulger D."/>
            <person name="Fritz C."/>
            <person name="Fujita M."/>
            <person name="Fujita Y."/>
            <person name="Fuma S."/>
            <person name="Galizzi A."/>
            <person name="Galleron N."/>
            <person name="Ghim S.-Y."/>
            <person name="Glaser P."/>
            <person name="Goffeau A."/>
            <person name="Golightly E.J."/>
            <person name="Grandi G."/>
            <person name="Guiseppi G."/>
            <person name="Guy B.J."/>
            <person name="Haga K."/>
            <person name="Haiech J."/>
            <person name="Harwood C.R."/>
            <person name="Henaut A."/>
            <person name="Hilbert H."/>
            <person name="Holsappel S."/>
            <person name="Hosono S."/>
            <person name="Hullo M.-F."/>
            <person name="Itaya M."/>
            <person name="Jones L.-M."/>
            <person name="Joris B."/>
            <person name="Karamata D."/>
            <person name="Kasahara Y."/>
            <person name="Klaerr-Blanchard M."/>
            <person name="Klein C."/>
            <person name="Kobayashi Y."/>
            <person name="Koetter P."/>
            <person name="Koningstein G."/>
            <person name="Krogh S."/>
            <person name="Kumano M."/>
            <person name="Kurita K."/>
            <person name="Lapidus A."/>
            <person name="Lardinois S."/>
            <person name="Lauber J."/>
            <person name="Lazarevic V."/>
            <person name="Lee S.-M."/>
            <person name="Levine A."/>
            <person name="Liu H."/>
            <person name="Masuda S."/>
            <person name="Mauel C."/>
            <person name="Medigue C."/>
            <person name="Medina N."/>
            <person name="Mellado R.P."/>
            <person name="Mizuno M."/>
            <person name="Moestl D."/>
            <person name="Nakai S."/>
            <person name="Noback M."/>
            <person name="Noone D."/>
            <person name="O'Reilly M."/>
            <person name="Ogawa K."/>
            <person name="Ogiwara A."/>
            <person name="Oudega B."/>
            <person name="Park S.-H."/>
            <person name="Parro V."/>
            <person name="Pohl T.M."/>
            <person name="Portetelle D."/>
            <person name="Porwollik S."/>
            <person name="Prescott A.M."/>
            <person name="Presecan E."/>
            <person name="Pujic P."/>
            <person name="Purnelle B."/>
            <person name="Rapoport G."/>
            <person name="Rey M."/>
            <person name="Reynolds S."/>
            <person name="Rieger M."/>
            <person name="Rivolta C."/>
            <person name="Rocha E."/>
            <person name="Roche B."/>
            <person name="Rose M."/>
            <person name="Sadaie Y."/>
            <person name="Sato T."/>
            <person name="Scanlan E."/>
            <person name="Schleich S."/>
            <person name="Schroeter R."/>
            <person name="Scoffone F."/>
            <person name="Sekiguchi J."/>
            <person name="Sekowska A."/>
            <person name="Seror S.J."/>
            <person name="Serror P."/>
            <person name="Shin B.-S."/>
            <person name="Soldo B."/>
            <person name="Sorokin A."/>
            <person name="Tacconi E."/>
            <person name="Takagi T."/>
            <person name="Takahashi H."/>
            <person name="Takemaru K."/>
            <person name="Takeuchi M."/>
            <person name="Tamakoshi A."/>
            <person name="Tanaka T."/>
            <person name="Terpstra P."/>
            <person name="Tognoni A."/>
            <person name="Tosato V."/>
            <person name="Uchiyama S."/>
            <person name="Vandenbol M."/>
            <person name="Vannier F."/>
            <person name="Vassarotti A."/>
            <person name="Viari A."/>
            <person name="Wambutt R."/>
            <person name="Wedler E."/>
            <person name="Wedler H."/>
            <person name="Weitzenegger T."/>
            <person name="Winters P."/>
            <person name="Wipat A."/>
            <person name="Yamamoto H."/>
            <person name="Yamane K."/>
            <person name="Yasumoto K."/>
            <person name="Yata K."/>
            <person name="Yoshida K."/>
            <person name="Yoshikawa H.-F."/>
            <person name="Zumstein E."/>
            <person name="Yoshikawa H."/>
            <person name="Danchin A."/>
        </authorList>
    </citation>
    <scope>NUCLEOTIDE SEQUENCE [LARGE SCALE GENOMIC DNA]</scope>
    <source>
        <strain>168</strain>
    </source>
</reference>
<reference key="3">
    <citation type="journal article" date="2006" name="J. Bacteriol.">
        <title>Maltose and maltodextrin utilization by Bacillus subtilis.</title>
        <authorList>
            <person name="Schoenert S."/>
            <person name="Seitz S."/>
            <person name="Krafft H."/>
            <person name="Feuerbaum E.-A."/>
            <person name="Andernach I."/>
            <person name="Witz G."/>
            <person name="Dahl M.K."/>
        </authorList>
    </citation>
    <scope>FUNCTION</scope>
    <scope>NOMENCLATURE</scope>
    <source>
        <strain>168</strain>
    </source>
</reference>
<comment type="function">
    <text evidence="3">Part of the ABC transporter complex involved in maltodextrin import. Probably responsible for the translocation of the substrate across the membrane (Probable).</text>
</comment>
<comment type="subunit">
    <text evidence="2">The complex is composed of two ATP-binding proteins (MsmX), two transmembrane proteins (MdxF and MdxG) and a solute-binding protein (MdxE).</text>
</comment>
<comment type="subcellular location">
    <subcellularLocation>
        <location evidence="2">Cell membrane</location>
        <topology evidence="2">Multi-pass membrane protein</topology>
    </subcellularLocation>
</comment>
<comment type="similarity">
    <text evidence="2">Belongs to the binding-protein-dependent transport system permease family. MalFG subfamily.</text>
</comment>